<sequence>MESNRDEAERCVRIAKAAIEAGDKEKAKRFLSKAERLYPSSEARALLQAFEKNDTAGNGPQSAKMAKGTEQPKAEKDSNASASSDTGKGHTQDQLDGVQRIKKCKTYYEVLGVSTDAGEEDLKKAYRKLALKFHPDKNHAPGATEAFKKIGNAYAVLSNPEKRKQYDLTGSEDQMQNNHRNGGFDYHRGFEADITPEDLFNMFFGGGFPSGSVHTFSNGRARYSHHQHHHHSGHDREDERADGGFSMFIQLMPIIVLILVSLLSQFMVSNPPYSLYPRSGQATKRVTENLQIAYYVSKDFQSEYSGILLQKLEKNIEEDYVANVRNNCWRERQQRSDLMHAAKVYRDERLKVKAESISMENCKELNRLTSLFRGG</sequence>
<name>DJB14_XENTR</name>
<gene>
    <name type="primary">dnajb14</name>
    <name evidence="5" type="ORF">TEgg043m09.1</name>
</gene>
<evidence type="ECO:0000250" key="1">
    <source>
        <dbReference type="UniProtKB" id="Q8TBM8"/>
    </source>
</evidence>
<evidence type="ECO:0000255" key="2"/>
<evidence type="ECO:0000255" key="3">
    <source>
        <dbReference type="PROSITE-ProRule" id="PRU00286"/>
    </source>
</evidence>
<evidence type="ECO:0000256" key="4">
    <source>
        <dbReference type="SAM" id="MobiDB-lite"/>
    </source>
</evidence>
<evidence type="ECO:0000303" key="5">
    <source ref="1"/>
</evidence>
<evidence type="ECO:0000305" key="6"/>
<comment type="function">
    <text evidence="1">Acts as a co-chaperone with HSPA8/Hsc70; required to promote protein folding and trafficking, prevent aggregation of client proteins, and promote unfolded proteins to endoplasmic reticulum-associated degradation (ERAD) pathway. Acts by determining hspa8/Hsc70's ATPase and polypeptide-binding activities. Can also act independently of hspa8/Hsc70: together with dnajb12, acts as a chaperone that promotes maturation of potassium channels by stabilizing nascent channel subunits and assembling them into tetramers. While stabilization of nascent channel proteins is dependent on hspa8/Hsc70, the process of oligomerization of channel subunits is independent of hspa8/Hsc70.</text>
</comment>
<comment type="subcellular location">
    <subcellularLocation>
        <location evidence="1">Endoplasmic reticulum membrane</location>
        <topology evidence="2">Single-pass membrane protein</topology>
    </subcellularLocation>
</comment>
<comment type="similarity">
    <text evidence="6">Belongs to the DnaJ family. DNAJB12/DNAJB14 subfamily.</text>
</comment>
<organism>
    <name type="scientific">Xenopus tropicalis</name>
    <name type="common">Western clawed frog</name>
    <name type="synonym">Silurana tropicalis</name>
    <dbReference type="NCBI Taxonomy" id="8364"/>
    <lineage>
        <taxon>Eukaryota</taxon>
        <taxon>Metazoa</taxon>
        <taxon>Chordata</taxon>
        <taxon>Craniata</taxon>
        <taxon>Vertebrata</taxon>
        <taxon>Euteleostomi</taxon>
        <taxon>Amphibia</taxon>
        <taxon>Batrachia</taxon>
        <taxon>Anura</taxon>
        <taxon>Pipoidea</taxon>
        <taxon>Pipidae</taxon>
        <taxon>Xenopodinae</taxon>
        <taxon>Xenopus</taxon>
        <taxon>Silurana</taxon>
    </lineage>
</organism>
<accession>Q28I38</accession>
<reference key="1">
    <citation type="submission" date="2006-10" db="EMBL/GenBank/DDBJ databases">
        <authorList>
            <consortium name="Sanger Xenopus tropicalis EST/cDNA project"/>
        </authorList>
    </citation>
    <scope>NUCLEOTIDE SEQUENCE [LARGE SCALE MRNA]</scope>
    <source>
        <tissue>Egg</tissue>
    </source>
</reference>
<protein>
    <recommendedName>
        <fullName>DnaJ homolog subfamily B member 14</fullName>
    </recommendedName>
</protein>
<keyword id="KW-0143">Chaperone</keyword>
<keyword id="KW-0256">Endoplasmic reticulum</keyword>
<keyword id="KW-0472">Membrane</keyword>
<keyword id="KW-1185">Reference proteome</keyword>
<keyword id="KW-0812">Transmembrane</keyword>
<keyword id="KW-1133">Transmembrane helix</keyword>
<feature type="chain" id="PRO_0000281482" description="DnaJ homolog subfamily B member 14">
    <location>
        <begin position="1"/>
        <end position="375"/>
    </location>
</feature>
<feature type="topological domain" description="Cytoplasmic" evidence="2">
    <location>
        <begin position="1"/>
        <end position="242"/>
    </location>
</feature>
<feature type="transmembrane region" description="Helical" evidence="2">
    <location>
        <begin position="243"/>
        <end position="263"/>
    </location>
</feature>
<feature type="topological domain" description="Lumenal" evidence="2">
    <location>
        <begin position="264"/>
        <end position="375"/>
    </location>
</feature>
<feature type="domain" description="J" evidence="3">
    <location>
        <begin position="106"/>
        <end position="170"/>
    </location>
</feature>
<feature type="region of interest" description="Disordered" evidence="4">
    <location>
        <begin position="48"/>
        <end position="95"/>
    </location>
</feature>
<proteinExistence type="evidence at transcript level"/>
<dbReference type="EMBL" id="CR760610">
    <property type="protein sequence ID" value="CAJ81323.1"/>
    <property type="molecule type" value="mRNA"/>
</dbReference>
<dbReference type="RefSeq" id="NP_001016588.1">
    <property type="nucleotide sequence ID" value="NM_001016588.2"/>
</dbReference>
<dbReference type="SMR" id="Q28I38"/>
<dbReference type="FunCoup" id="Q28I38">
    <property type="interactions" value="2906"/>
</dbReference>
<dbReference type="STRING" id="8364.ENSXETP00000018545"/>
<dbReference type="PaxDb" id="8364-ENSXETP00000020490"/>
<dbReference type="GeneID" id="549342"/>
<dbReference type="KEGG" id="xtr:549342"/>
<dbReference type="AGR" id="Xenbase:XB-GENE-952313"/>
<dbReference type="CTD" id="79982"/>
<dbReference type="Xenbase" id="XB-GENE-952313">
    <property type="gene designation" value="dnajb14"/>
</dbReference>
<dbReference type="eggNOG" id="KOG0714">
    <property type="taxonomic scope" value="Eukaryota"/>
</dbReference>
<dbReference type="HOGENOM" id="CLU_043579_3_0_1"/>
<dbReference type="InParanoid" id="Q28I38"/>
<dbReference type="OMA" id="DDRMRKK"/>
<dbReference type="OrthoDB" id="442087at2759"/>
<dbReference type="PhylomeDB" id="Q28I38"/>
<dbReference type="TreeFam" id="TF105145"/>
<dbReference type="Proteomes" id="UP000008143">
    <property type="component" value="Chromosome 1"/>
</dbReference>
<dbReference type="Bgee" id="ENSXETG00000011168">
    <property type="expression patterns" value="Expressed in 2-cell stage embryo and 12 other cell types or tissues"/>
</dbReference>
<dbReference type="GO" id="GO:0005783">
    <property type="term" value="C:endoplasmic reticulum"/>
    <property type="evidence" value="ECO:0000250"/>
    <property type="project" value="UniProtKB"/>
</dbReference>
<dbReference type="GO" id="GO:0005789">
    <property type="term" value="C:endoplasmic reticulum membrane"/>
    <property type="evidence" value="ECO:0007669"/>
    <property type="project" value="UniProtKB-SubCell"/>
</dbReference>
<dbReference type="GO" id="GO:0051085">
    <property type="term" value="P:chaperone cofactor-dependent protein refolding"/>
    <property type="evidence" value="ECO:0000250"/>
    <property type="project" value="UniProtKB"/>
</dbReference>
<dbReference type="GO" id="GO:0065003">
    <property type="term" value="P:protein-containing complex assembly"/>
    <property type="evidence" value="ECO:0000250"/>
    <property type="project" value="UniProtKB"/>
</dbReference>
<dbReference type="CDD" id="cd06257">
    <property type="entry name" value="DnaJ"/>
    <property type="match status" value="1"/>
</dbReference>
<dbReference type="FunFam" id="1.10.287.110:FF:000004">
    <property type="entry name" value="DnaJ (Hsp40) homolog, subfamily B, member 14"/>
    <property type="match status" value="1"/>
</dbReference>
<dbReference type="Gene3D" id="1.10.287.110">
    <property type="entry name" value="DnaJ domain"/>
    <property type="match status" value="1"/>
</dbReference>
<dbReference type="InterPro" id="IPR001623">
    <property type="entry name" value="DnaJ_domain"/>
</dbReference>
<dbReference type="InterPro" id="IPR018253">
    <property type="entry name" value="DnaJ_domain_CS"/>
</dbReference>
<dbReference type="InterPro" id="IPR051100">
    <property type="entry name" value="DnaJ_subfamily_B/C"/>
</dbReference>
<dbReference type="InterPro" id="IPR015399">
    <property type="entry name" value="DUF1977_DnaJ-like"/>
</dbReference>
<dbReference type="InterPro" id="IPR036869">
    <property type="entry name" value="J_dom_sf"/>
</dbReference>
<dbReference type="PANTHER" id="PTHR43908">
    <property type="entry name" value="AT29763P-RELATED"/>
    <property type="match status" value="1"/>
</dbReference>
<dbReference type="PANTHER" id="PTHR43908:SF4">
    <property type="entry name" value="DNAJ HOMOLOG SUBFAMILY B MEMBER 14"/>
    <property type="match status" value="1"/>
</dbReference>
<dbReference type="Pfam" id="PF00226">
    <property type="entry name" value="DnaJ"/>
    <property type="match status" value="1"/>
</dbReference>
<dbReference type="Pfam" id="PF09320">
    <property type="entry name" value="DUF1977"/>
    <property type="match status" value="1"/>
</dbReference>
<dbReference type="PRINTS" id="PR00625">
    <property type="entry name" value="JDOMAIN"/>
</dbReference>
<dbReference type="SMART" id="SM00271">
    <property type="entry name" value="DnaJ"/>
    <property type="match status" value="1"/>
</dbReference>
<dbReference type="SUPFAM" id="SSF46565">
    <property type="entry name" value="Chaperone J-domain"/>
    <property type="match status" value="1"/>
</dbReference>
<dbReference type="PROSITE" id="PS00636">
    <property type="entry name" value="DNAJ_1"/>
    <property type="match status" value="1"/>
</dbReference>
<dbReference type="PROSITE" id="PS50076">
    <property type="entry name" value="DNAJ_2"/>
    <property type="match status" value="1"/>
</dbReference>